<gene>
    <name evidence="1" type="primary">atpA</name>
    <name type="ordered locus">Asuc_0328</name>
</gene>
<keyword id="KW-0066">ATP synthesis</keyword>
<keyword id="KW-0067">ATP-binding</keyword>
<keyword id="KW-0997">Cell inner membrane</keyword>
<keyword id="KW-1003">Cell membrane</keyword>
<keyword id="KW-0139">CF(1)</keyword>
<keyword id="KW-0375">Hydrogen ion transport</keyword>
<keyword id="KW-0406">Ion transport</keyword>
<keyword id="KW-0472">Membrane</keyword>
<keyword id="KW-0547">Nucleotide-binding</keyword>
<keyword id="KW-1185">Reference proteome</keyword>
<keyword id="KW-1278">Translocase</keyword>
<keyword id="KW-0813">Transport</keyword>
<reference key="1">
    <citation type="journal article" date="2010" name="BMC Genomics">
        <title>A genomic perspective on the potential of Actinobacillus succinogenes for industrial succinate production.</title>
        <authorList>
            <person name="McKinlay J.B."/>
            <person name="Laivenieks M."/>
            <person name="Schindler B.D."/>
            <person name="McKinlay A.A."/>
            <person name="Siddaramappa S."/>
            <person name="Challacombe J.F."/>
            <person name="Lowry S.R."/>
            <person name="Clum A."/>
            <person name="Lapidus A.L."/>
            <person name="Burkhart K.B."/>
            <person name="Harkins V."/>
            <person name="Vieille C."/>
        </authorList>
    </citation>
    <scope>NUCLEOTIDE SEQUENCE [LARGE SCALE GENOMIC DNA]</scope>
    <source>
        <strain>ATCC 55618 / DSM 22257 / CCUG 43843 / 130Z</strain>
    </source>
</reference>
<sequence length="513" mass="55757">MQLNSTEISELIKKRIAQFDVVSEARNTGTIVSVSDGIIRIHGLSEVMQGEMIALPDNRYAMALNLERDSVGAVVMGPYIDLAEGMEVQCTGRILEVPVGRGLLGRVVNTLGQPIDGKGEIKNDGFSPVEVIAPGVIERKSVDQPVQTGYKAVDSMVPIGRGQRELIIGDRQTGKTALAIDTIINQKDSGIKCIYVAIGQKASTIANVVRKLEENGALANTIIVVASASESAALQYLAPYAGCAMGEYFRDRGEDALIIYDDLSKQAVAYRQISLLLRRPPGREAFPGDVFYLHSRLLERAARVNEEYVENFTKGEVKGKTGSLTALPIIETQAGDVSAFVPTNVISITDGQIFLESNLFNAGVRPAVNPGISVSRVGGAAQTKVVKKLAGGIRTALAQYRELAAFAQFASDLDDATRKQLSHGEKVTEMLKQKQYAPLSVAEQAVLLFAVEFGYLDDVELNKIADFETTLLDYANRTNAEFMRELTQSGDYNDEIKNTLEGILNNFKANNTW</sequence>
<protein>
    <recommendedName>
        <fullName evidence="1">ATP synthase subunit alpha</fullName>
        <ecNumber evidence="1">7.1.2.2</ecNumber>
    </recommendedName>
    <alternativeName>
        <fullName evidence="1">ATP synthase F1 sector subunit alpha</fullName>
    </alternativeName>
    <alternativeName>
        <fullName evidence="1">F-ATPase subunit alpha</fullName>
    </alternativeName>
</protein>
<name>ATPA_ACTSZ</name>
<comment type="function">
    <text evidence="1">Produces ATP from ADP in the presence of a proton gradient across the membrane. The alpha chain is a regulatory subunit.</text>
</comment>
<comment type="catalytic activity">
    <reaction evidence="1">
        <text>ATP + H2O + 4 H(+)(in) = ADP + phosphate + 5 H(+)(out)</text>
        <dbReference type="Rhea" id="RHEA:57720"/>
        <dbReference type="ChEBI" id="CHEBI:15377"/>
        <dbReference type="ChEBI" id="CHEBI:15378"/>
        <dbReference type="ChEBI" id="CHEBI:30616"/>
        <dbReference type="ChEBI" id="CHEBI:43474"/>
        <dbReference type="ChEBI" id="CHEBI:456216"/>
        <dbReference type="EC" id="7.1.2.2"/>
    </reaction>
</comment>
<comment type="subunit">
    <text evidence="1">F-type ATPases have 2 components, CF(1) - the catalytic core - and CF(0) - the membrane proton channel. CF(1) has five subunits: alpha(3), beta(3), gamma(1), delta(1), epsilon(1). CF(0) has three main subunits: a(1), b(2) and c(9-12). The alpha and beta chains form an alternating ring which encloses part of the gamma chain. CF(1) is attached to CF(0) by a central stalk formed by the gamma and epsilon chains, while a peripheral stalk is formed by the delta and b chains.</text>
</comment>
<comment type="subcellular location">
    <subcellularLocation>
        <location evidence="1">Cell inner membrane</location>
        <topology evidence="1">Peripheral membrane protein</topology>
    </subcellularLocation>
</comment>
<comment type="similarity">
    <text evidence="1">Belongs to the ATPase alpha/beta chains family.</text>
</comment>
<evidence type="ECO:0000255" key="1">
    <source>
        <dbReference type="HAMAP-Rule" id="MF_01346"/>
    </source>
</evidence>
<accession>A6VL59</accession>
<feature type="chain" id="PRO_1000073349" description="ATP synthase subunit alpha">
    <location>
        <begin position="1"/>
        <end position="513"/>
    </location>
</feature>
<feature type="binding site" evidence="1">
    <location>
        <begin position="169"/>
        <end position="176"/>
    </location>
    <ligand>
        <name>ATP</name>
        <dbReference type="ChEBI" id="CHEBI:30616"/>
    </ligand>
</feature>
<feature type="site" description="Required for activity" evidence="1">
    <location>
        <position position="373"/>
    </location>
</feature>
<organism>
    <name type="scientific">Actinobacillus succinogenes (strain ATCC 55618 / DSM 22257 / CCUG 43843 / 130Z)</name>
    <dbReference type="NCBI Taxonomy" id="339671"/>
    <lineage>
        <taxon>Bacteria</taxon>
        <taxon>Pseudomonadati</taxon>
        <taxon>Pseudomonadota</taxon>
        <taxon>Gammaproteobacteria</taxon>
        <taxon>Pasteurellales</taxon>
        <taxon>Pasteurellaceae</taxon>
        <taxon>Actinobacillus</taxon>
    </lineage>
</organism>
<proteinExistence type="inferred from homology"/>
<dbReference type="EC" id="7.1.2.2" evidence="1"/>
<dbReference type="EMBL" id="CP000746">
    <property type="protein sequence ID" value="ABR73706.1"/>
    <property type="molecule type" value="Genomic_DNA"/>
</dbReference>
<dbReference type="RefSeq" id="WP_011978981.1">
    <property type="nucleotide sequence ID" value="NC_009655.1"/>
</dbReference>
<dbReference type="SMR" id="A6VL59"/>
<dbReference type="STRING" id="339671.Asuc_0328"/>
<dbReference type="KEGG" id="asu:Asuc_0328"/>
<dbReference type="eggNOG" id="COG0056">
    <property type="taxonomic scope" value="Bacteria"/>
</dbReference>
<dbReference type="HOGENOM" id="CLU_010091_2_1_6"/>
<dbReference type="OrthoDB" id="9803053at2"/>
<dbReference type="Proteomes" id="UP000001114">
    <property type="component" value="Chromosome"/>
</dbReference>
<dbReference type="GO" id="GO:0005886">
    <property type="term" value="C:plasma membrane"/>
    <property type="evidence" value="ECO:0007669"/>
    <property type="project" value="UniProtKB-SubCell"/>
</dbReference>
<dbReference type="GO" id="GO:0045259">
    <property type="term" value="C:proton-transporting ATP synthase complex"/>
    <property type="evidence" value="ECO:0007669"/>
    <property type="project" value="UniProtKB-KW"/>
</dbReference>
<dbReference type="GO" id="GO:0043531">
    <property type="term" value="F:ADP binding"/>
    <property type="evidence" value="ECO:0007669"/>
    <property type="project" value="TreeGrafter"/>
</dbReference>
<dbReference type="GO" id="GO:0005524">
    <property type="term" value="F:ATP binding"/>
    <property type="evidence" value="ECO:0007669"/>
    <property type="project" value="UniProtKB-UniRule"/>
</dbReference>
<dbReference type="GO" id="GO:0046933">
    <property type="term" value="F:proton-transporting ATP synthase activity, rotational mechanism"/>
    <property type="evidence" value="ECO:0007669"/>
    <property type="project" value="UniProtKB-UniRule"/>
</dbReference>
<dbReference type="CDD" id="cd18113">
    <property type="entry name" value="ATP-synt_F1_alpha_C"/>
    <property type="match status" value="1"/>
</dbReference>
<dbReference type="CDD" id="cd18116">
    <property type="entry name" value="ATP-synt_F1_alpha_N"/>
    <property type="match status" value="1"/>
</dbReference>
<dbReference type="CDD" id="cd01132">
    <property type="entry name" value="F1-ATPase_alpha_CD"/>
    <property type="match status" value="1"/>
</dbReference>
<dbReference type="FunFam" id="1.20.150.20:FF:000001">
    <property type="entry name" value="ATP synthase subunit alpha"/>
    <property type="match status" value="1"/>
</dbReference>
<dbReference type="FunFam" id="2.40.30.20:FF:000001">
    <property type="entry name" value="ATP synthase subunit alpha"/>
    <property type="match status" value="1"/>
</dbReference>
<dbReference type="FunFam" id="3.40.50.300:FF:000002">
    <property type="entry name" value="ATP synthase subunit alpha"/>
    <property type="match status" value="1"/>
</dbReference>
<dbReference type="Gene3D" id="2.40.30.20">
    <property type="match status" value="1"/>
</dbReference>
<dbReference type="Gene3D" id="1.20.150.20">
    <property type="entry name" value="ATP synthase alpha/beta chain, C-terminal domain"/>
    <property type="match status" value="1"/>
</dbReference>
<dbReference type="Gene3D" id="3.40.50.300">
    <property type="entry name" value="P-loop containing nucleotide triphosphate hydrolases"/>
    <property type="match status" value="1"/>
</dbReference>
<dbReference type="HAMAP" id="MF_01346">
    <property type="entry name" value="ATP_synth_alpha_bact"/>
    <property type="match status" value="1"/>
</dbReference>
<dbReference type="InterPro" id="IPR023366">
    <property type="entry name" value="ATP_synth_asu-like_sf"/>
</dbReference>
<dbReference type="InterPro" id="IPR000793">
    <property type="entry name" value="ATP_synth_asu_C"/>
</dbReference>
<dbReference type="InterPro" id="IPR038376">
    <property type="entry name" value="ATP_synth_asu_C_sf"/>
</dbReference>
<dbReference type="InterPro" id="IPR033732">
    <property type="entry name" value="ATP_synth_F1_a_nt-bd_dom"/>
</dbReference>
<dbReference type="InterPro" id="IPR005294">
    <property type="entry name" value="ATP_synth_F1_asu"/>
</dbReference>
<dbReference type="InterPro" id="IPR020003">
    <property type="entry name" value="ATPase_a/bsu_AS"/>
</dbReference>
<dbReference type="InterPro" id="IPR004100">
    <property type="entry name" value="ATPase_F1/V1/A1_a/bsu_N"/>
</dbReference>
<dbReference type="InterPro" id="IPR036121">
    <property type="entry name" value="ATPase_F1/V1/A1_a/bsu_N_sf"/>
</dbReference>
<dbReference type="InterPro" id="IPR000194">
    <property type="entry name" value="ATPase_F1/V1/A1_a/bsu_nucl-bd"/>
</dbReference>
<dbReference type="InterPro" id="IPR027417">
    <property type="entry name" value="P-loop_NTPase"/>
</dbReference>
<dbReference type="NCBIfam" id="TIGR00962">
    <property type="entry name" value="atpA"/>
    <property type="match status" value="1"/>
</dbReference>
<dbReference type="NCBIfam" id="NF009884">
    <property type="entry name" value="PRK13343.1"/>
    <property type="match status" value="1"/>
</dbReference>
<dbReference type="PANTHER" id="PTHR48082">
    <property type="entry name" value="ATP SYNTHASE SUBUNIT ALPHA, MITOCHONDRIAL"/>
    <property type="match status" value="1"/>
</dbReference>
<dbReference type="PANTHER" id="PTHR48082:SF2">
    <property type="entry name" value="ATP SYNTHASE SUBUNIT ALPHA, MITOCHONDRIAL"/>
    <property type="match status" value="1"/>
</dbReference>
<dbReference type="Pfam" id="PF00006">
    <property type="entry name" value="ATP-synt_ab"/>
    <property type="match status" value="1"/>
</dbReference>
<dbReference type="Pfam" id="PF00306">
    <property type="entry name" value="ATP-synt_ab_C"/>
    <property type="match status" value="1"/>
</dbReference>
<dbReference type="Pfam" id="PF02874">
    <property type="entry name" value="ATP-synt_ab_N"/>
    <property type="match status" value="1"/>
</dbReference>
<dbReference type="SUPFAM" id="SSF47917">
    <property type="entry name" value="C-terminal domain of alpha and beta subunits of F1 ATP synthase"/>
    <property type="match status" value="1"/>
</dbReference>
<dbReference type="SUPFAM" id="SSF50615">
    <property type="entry name" value="N-terminal domain of alpha and beta subunits of F1 ATP synthase"/>
    <property type="match status" value="1"/>
</dbReference>
<dbReference type="SUPFAM" id="SSF52540">
    <property type="entry name" value="P-loop containing nucleoside triphosphate hydrolases"/>
    <property type="match status" value="1"/>
</dbReference>
<dbReference type="PROSITE" id="PS00152">
    <property type="entry name" value="ATPASE_ALPHA_BETA"/>
    <property type="match status" value="1"/>
</dbReference>